<organism>
    <name type="scientific">Paramecium primaurelia</name>
    <dbReference type="NCBI Taxonomy" id="5886"/>
    <lineage>
        <taxon>Eukaryota</taxon>
        <taxon>Sar</taxon>
        <taxon>Alveolata</taxon>
        <taxon>Ciliophora</taxon>
        <taxon>Intramacronucleata</taxon>
        <taxon>Oligohymenophorea</taxon>
        <taxon>Peniculida</taxon>
        <taxon>Parameciidae</taxon>
        <taxon>Paramecium</taxon>
    </lineage>
</organism>
<accession>P13837</accession>
<feature type="signal peptide" evidence="1">
    <location>
        <begin position="1"/>
        <end position="20"/>
    </location>
</feature>
<feature type="chain" id="PRO_0000021310" description="G surface protein, allelic form 156">
    <location>
        <begin position="21"/>
        <end position="2715"/>
    </location>
</feature>
<feature type="repeat" description="PSA 1">
    <location>
        <begin position="111"/>
        <end position="171"/>
    </location>
</feature>
<feature type="repeat" description="PSA 2">
    <location>
        <begin position="177"/>
        <end position="237"/>
    </location>
</feature>
<feature type="repeat" description="PSA 3">
    <location>
        <begin position="243"/>
        <end position="303"/>
    </location>
</feature>
<feature type="repeat" description="PSA 4">
    <location>
        <begin position="309"/>
        <end position="366"/>
    </location>
</feature>
<feature type="repeat" description="PSA 5">
    <location>
        <begin position="372"/>
        <end position="404"/>
    </location>
</feature>
<feature type="repeat" description="PSA 6">
    <location>
        <begin position="405"/>
        <end position="467"/>
    </location>
</feature>
<feature type="repeat" description="PSA 7">
    <location>
        <begin position="473"/>
        <end position="530"/>
    </location>
</feature>
<feature type="repeat" description="PSA 8">
    <location>
        <begin position="536"/>
        <end position="596"/>
    </location>
</feature>
<feature type="repeat" description="PSA 9">
    <location>
        <begin position="602"/>
        <end position="673"/>
    </location>
</feature>
<feature type="repeat" description="PSA 10">
    <location>
        <begin position="688"/>
        <end position="748"/>
    </location>
</feature>
<feature type="repeat" description="PSA 11">
    <location>
        <begin position="752"/>
        <end position="812"/>
    </location>
</feature>
<feature type="repeat" description="PSA 12">
    <location>
        <begin position="820"/>
        <end position="895"/>
    </location>
</feature>
<feature type="repeat" description="PSA 13">
    <location>
        <begin position="934"/>
        <end position="1001"/>
    </location>
</feature>
<feature type="repeat" description="PSA 14">
    <location>
        <begin position="1008"/>
        <end position="1067"/>
    </location>
</feature>
<feature type="repeat" description="PSA 15">
    <location>
        <begin position="1073"/>
        <end position="1141"/>
    </location>
</feature>
<feature type="repeat" description="PSA 16">
    <location>
        <begin position="1147"/>
        <end position="1215"/>
    </location>
</feature>
<feature type="repeat" description="PSA 17">
    <location>
        <begin position="1221"/>
        <end position="1289"/>
    </location>
</feature>
<feature type="repeat" description="PSA 18">
    <location>
        <begin position="1295"/>
        <end position="1363"/>
    </location>
</feature>
<feature type="repeat" description="PSA 19">
    <location>
        <begin position="1369"/>
        <end position="1437"/>
    </location>
</feature>
<feature type="repeat" description="PSA 20">
    <location>
        <begin position="1443"/>
        <end position="1507"/>
    </location>
</feature>
<feature type="repeat" description="PSA 21">
    <location>
        <begin position="1513"/>
        <end position="1578"/>
    </location>
</feature>
<feature type="repeat" description="PSA 22">
    <location>
        <begin position="1586"/>
        <end position="1652"/>
    </location>
</feature>
<feature type="repeat" description="PSA 23">
    <location>
        <begin position="1693"/>
        <end position="1751"/>
    </location>
</feature>
<feature type="repeat" description="PSA 24">
    <location>
        <begin position="1759"/>
        <end position="1819"/>
    </location>
</feature>
<feature type="repeat" description="PSA 25">
    <location>
        <begin position="1827"/>
        <end position="1898"/>
    </location>
</feature>
<feature type="repeat" description="PSA 26">
    <location>
        <begin position="1904"/>
        <end position="1976"/>
    </location>
</feature>
<feature type="repeat" description="PSA 27">
    <location>
        <begin position="1984"/>
        <end position="2044"/>
    </location>
</feature>
<feature type="repeat" description="PSA 28">
    <location>
        <begin position="2080"/>
        <end position="2149"/>
    </location>
</feature>
<feature type="repeat" description="PSA 29">
    <location>
        <begin position="2155"/>
        <end position="2215"/>
    </location>
</feature>
<feature type="repeat" description="PSA 30">
    <location>
        <begin position="2219"/>
        <end position="2286"/>
    </location>
</feature>
<feature type="repeat" description="PSA 31">
    <location>
        <begin position="2290"/>
        <end position="2355"/>
    </location>
</feature>
<feature type="repeat" description="PSA 32">
    <location>
        <begin position="2359"/>
        <end position="2430"/>
    </location>
</feature>
<feature type="repeat" description="PSA 33">
    <location>
        <begin position="2434"/>
        <end position="2500"/>
    </location>
</feature>
<feature type="repeat" description="PSA 34">
    <location>
        <begin position="2505"/>
        <end position="2573"/>
    </location>
</feature>
<evidence type="ECO:0000255" key="1"/>
<name>G156_PARPR</name>
<reference key="1">
    <citation type="journal article" date="1986" name="J. Mol. Biol.">
        <title>Nucleotide sequence of the Paramecium primaurelia G surface protein. A huge protein with a highly periodic structure.</title>
        <authorList>
            <person name="Prat A."/>
            <person name="Katinka M."/>
            <person name="Caron F."/>
            <person name="Meyer E."/>
        </authorList>
    </citation>
    <scope>NUCLEOTIDE SEQUENCE [GENOMIC DNA]</scope>
    <source>
        <strain>156</strain>
    </source>
</reference>
<protein>
    <recommendedName>
        <fullName>G surface protein, allelic form 156</fullName>
    </recommendedName>
</protein>
<comment type="function">
    <text>This protein is the surface antigen or immobilization antigen of Paramecium primaurelia.</text>
</comment>
<comment type="subcellular location">
    <subcellularLocation>
        <location>Cell membrane</location>
        <topology>Lipid-anchor</topology>
        <topology>GPI-anchor</topology>
    </subcellularLocation>
</comment>
<comment type="induction">
    <text>Expression of G protein occurs at low temperatures (14-32 degrees Celsius).</text>
</comment>
<comment type="domain">
    <text>It has internal homologies and a highly periodic structure with 34 periods of about 75 residues, each period containing 8 cysteines, except for four half periods. A variable part of 475 residues comprises 4 almost identical periods in the middle of the protein.</text>
</comment>
<dbReference type="EMBL" id="X03882">
    <property type="protein sequence ID" value="CAA27514.1"/>
    <property type="molecule type" value="Genomic_DNA"/>
</dbReference>
<dbReference type="PIR" id="A23475">
    <property type="entry name" value="A23475"/>
</dbReference>
<dbReference type="GO" id="GO:0005886">
    <property type="term" value="C:plasma membrane"/>
    <property type="evidence" value="ECO:0007669"/>
    <property type="project" value="UniProtKB-SubCell"/>
</dbReference>
<dbReference type="GO" id="GO:0098552">
    <property type="term" value="C:side of membrane"/>
    <property type="evidence" value="ECO:0007669"/>
    <property type="project" value="UniProtKB-KW"/>
</dbReference>
<dbReference type="InterPro" id="IPR002895">
    <property type="entry name" value="Paramecium_SA"/>
</dbReference>
<dbReference type="InterPro" id="IPR016201">
    <property type="entry name" value="PSI"/>
</dbReference>
<dbReference type="Pfam" id="PF01508">
    <property type="entry name" value="Paramecium_SA"/>
    <property type="match status" value="31"/>
</dbReference>
<dbReference type="SMART" id="SM00639">
    <property type="entry name" value="PSA"/>
    <property type="match status" value="33"/>
</dbReference>
<dbReference type="SMART" id="SM00423">
    <property type="entry name" value="PSI"/>
    <property type="match status" value="10"/>
</dbReference>
<gene>
    <name type="primary">156G</name>
</gene>
<sequence length="2715" mass="279551">MNNKFIIFSLLLALVASQTYSLTSCTCAQLLSEGDCIKNVSLGCSWDTTKKTCGVSTTPVTPTVTYAAYCDTFAETDCPKAKPCTDCGNYAACAWVESKCTFFTGCTPFAKTLDSECQAISNRCITDGTHCVEVDACSTYKKQLPCAKNAAGSLCYWDTTNNTCVDANTCDKLPATFATDKDCRDVISTCTTKTGGGCVDSGNNCSDQTLEIQCVWNKLKTTSCYWDGAACKDRICDNAPTSLTTDDACKTFRTDGTCTTKANGGCVTRTTCAAATIQASCIKNSSGGDCYWTGTACVDKACANTPTTIATNSACAGFVTGCITKSGGGCVVNGACSVANVQAACVKNPSNFDCIWDTTCKEKTCANASTTNNTHDLCTSYLSTCTVKSGGGCQNRTCANAPTTMTTNDACEAYFTGNNCITKSGGGCVTNTTCAAITLEAACVKNSSGSTCFWDTASSSCKDKTCVNAPATNTTHDLCQPFLNTCTVNSTSAGCVEKTCENSLVLAICDKDTSSRACIWKGKCYKKQCVLASSATTTHADCQTYHSTCTLSNSGTGCVPLPLKCEAITIEAACNLKANGQPCGWNGSQCIDKACSTASKTFTTTSQCTGHISTCVANNPVTVNGSLTIQGCQDLPTTCARRKSSENCEITRVGFPTCLWVSSSTSCVEKSCATASTVGTTGALSAGGFTFSGCQTYLNTCISNNTADGCIAKPSSCSSLVSSNCRDGSKASGDCYWNGSSCVDKTCANIIQTTHNSCNTTFNQCTVNNGGTACQTLATACTSYSTQENCKFTSTNKNCVWTGLACRNATCADAPDTTAYDSDTECLAYPTPSETCTVVYKVGAQGCVSKSANCSDYMTSAQCHKTLTNLTANDDCKWIVDRCYALSSFATGACTTFKGTKTMCEGYRAGCTNTVGAASSASCTLDCTLKTGSGLTFADCQALDSTCSVKKDGTGCIAIQSTCAGYGSTAANCFRSSASGTAGYCAMNTNCQSVTSAAECAFVTGLTGLDHSKCQLYHSSCTSLKDGTGCQEYKTTCSGYAATNNCATSGQGKCFFDVECLRFSNCASITGTGLTTAICGTYDAGCVANVNGTACQEKLATCDLYLTQNSCSTSAAAATADKCAWSGTACLAVTTVGTHCPYVTGTGLTDLICAAYNANCTANKAGTACQEKKATCNLYTTEATCSTSAAAATADKCAWSGAACLAVTTVATECAYVTGTGLTDLICAAYNANCTANKAGTACQEKKATCNLYTTEATCSTSAAAATADKCAWSGAACLAVTTVATECAYVTGTGLTNAICAAYNANCTANKAGTACQEKKATCNLYTTEATCSTSAAAATADKCAWSGAACLAVTTVATECAYVTGTGLTNAICAAYNANCTANKAGTACQEKKATCNLYTTEATCSTSAAAATADKCAWSGAACLAVTTVATECAYVTGTGLTKAICATYNAGCINLKDGTGCQEAKANCKDYTTSNKCTAQTTSTLSCLWIDNSCYPVTDLNCSVITGLGFVHAQCQAYSTGCTSVSDGSKCQDFKSTCEQYPGTTLGCTKTASTKCYLQGSACITISNVATDCAKITGSAGTITFEICQSYNTGCSVNRARSACVQQQAQCSGYTSAMTSCYKSGAGLCIASTNTDTACVAATAATCDAVYLGAGNYSSANCNEMKAGCTNNGTTACVAKTCANAAGITFNHTNCNSYLNTCTVNSGNSACQTMASKCADQTQASCLYSVEGECVVVGTSCVRKTCDTAATDATRDDDTECSTYQQSCTVARLGACQARAACATYKSSLQCKFNTSGGKCFWNPTNKTCVDLNCGNIEATTLYDTHNECVAVDATLACTVRATNGAAAQGCMARGACASYTIEEQCKTNASNGVCVWNTNANLPAPACQDKSCTSAPTSTTTHNDCYAYYNTATVKCTVVATPSNSGGNPTLGGCQQTAACSSYIDKEQCQINANGDPCGWNGTQCADKSCATASATADYDDDTKCRAYITNKCTVSDSGQGCVEIPATCETMTQKQCYYNKAGDPCYWTGTACITKSCDNAPDATATADECNTYLAGCTLNNVKCKTKVCEDFAFATDALCKQAISTCTTNGTNCVTRGTCFQALSQAGCVTSSTNQQCEWIPAVLNASNVITSPAYCTIKNCSTAPITLTSEAACAGYFTNCTTKNGGGCVTKSTCSAVTIDVACTTALNGTVCAWDSAQNKCRDKDCQDFSGTTHAACQAQRAGCTAGAGGKCARVQNCEQTSVRAACIEGTNGPCLWIDKYQNTDGTKGACFRYTSCKSLNWNNDSSCKWISNKCTTNGSNCVGITLCSETNTDGGCVTGYDGACIQSVPDLNSSDPKVCKPYTSCADAFYTTHSDCQIASSKCTTNGTTGCIALGSCSSYTVQAGCYFNDKGTLYTSGVITSTGICTWDTTSSSCRDQSCADLTGTTHATCSSQLSTCTSDGTTCLLKGACTSYTTQTACTTAVGSDGACYWELASATNNNTAKCRLLTCADIQNGTATNVCSVALSTCVSNGTACIPKANCSTYTSKVACNSGGLDGICVFTQSTATGAAAGTGTCALMTACTVANNDQTACQAARDRCSWTAASGTRATAVASKCATHTCATNQATNGACTRFLNWDKKTQQVCTLVSGACTATDPSSFSSNDCFLVSGYTYTCNASTSKCGVCTAVVVQPNTTDNNTNTTDNNTTTDSGYILGLSIVLGYLMF</sequence>
<keyword id="KW-1003">Cell membrane</keyword>
<keyword id="KW-0325">Glycoprotein</keyword>
<keyword id="KW-0336">GPI-anchor</keyword>
<keyword id="KW-0449">Lipoprotein</keyword>
<keyword id="KW-0472">Membrane</keyword>
<keyword id="KW-0677">Repeat</keyword>
<keyword id="KW-0732">Signal</keyword>
<proteinExistence type="evidence at transcript level"/>